<feature type="chain" id="PRO_0000235897" description="Chaperone Ric-8A">
    <location>
        <begin position="1"/>
        <end position="539"/>
    </location>
</feature>
<feature type="region of interest" description="Disordered" evidence="2">
    <location>
        <begin position="506"/>
        <end position="539"/>
    </location>
</feature>
<dbReference type="EMBL" id="DQ115398">
    <property type="protein sequence ID" value="AAZ23806.1"/>
    <property type="status" value="ALT_INIT"/>
    <property type="molecule type" value="mRNA"/>
</dbReference>
<dbReference type="RefSeq" id="NP_001165673.1">
    <property type="nucleotide sequence ID" value="NM_001172202.1"/>
</dbReference>
<dbReference type="SMR" id="Q45TX8"/>
<dbReference type="GeneID" id="100337603"/>
<dbReference type="AGR" id="Xenbase:XB-GENE-5745170"/>
<dbReference type="CTD" id="100337603"/>
<dbReference type="Xenbase" id="XB-GENE-5745170">
    <property type="gene designation" value="ric8a.S"/>
</dbReference>
<dbReference type="Proteomes" id="UP000186698">
    <property type="component" value="Unplaced"/>
</dbReference>
<dbReference type="GO" id="GO:0005938">
    <property type="term" value="C:cell cortex"/>
    <property type="evidence" value="ECO:0007669"/>
    <property type="project" value="UniProtKB-SubCell"/>
</dbReference>
<dbReference type="GO" id="GO:0005737">
    <property type="term" value="C:cytoplasm"/>
    <property type="evidence" value="ECO:0000250"/>
    <property type="project" value="UniProtKB"/>
</dbReference>
<dbReference type="GO" id="GO:0005886">
    <property type="term" value="C:plasma membrane"/>
    <property type="evidence" value="ECO:0000250"/>
    <property type="project" value="UniProtKB"/>
</dbReference>
<dbReference type="GO" id="GO:0001965">
    <property type="term" value="F:G-protein alpha-subunit binding"/>
    <property type="evidence" value="ECO:0000250"/>
    <property type="project" value="UniProtKB"/>
</dbReference>
<dbReference type="GO" id="GO:0005085">
    <property type="term" value="F:guanyl-nucleotide exchange factor activity"/>
    <property type="evidence" value="ECO:0000250"/>
    <property type="project" value="UniProtKB"/>
</dbReference>
<dbReference type="GO" id="GO:0044183">
    <property type="term" value="F:protein folding chaperone"/>
    <property type="evidence" value="ECO:0000250"/>
    <property type="project" value="UniProtKB"/>
</dbReference>
<dbReference type="GO" id="GO:0007186">
    <property type="term" value="P:G protein-coupled receptor signaling pathway"/>
    <property type="evidence" value="ECO:0000250"/>
    <property type="project" value="UniProtKB"/>
</dbReference>
<dbReference type="FunFam" id="1.25.10.10:FF:000447">
    <property type="entry name" value="RIC8 guanine nucleotide exchange factor A"/>
    <property type="match status" value="1"/>
</dbReference>
<dbReference type="Gene3D" id="1.25.10.10">
    <property type="entry name" value="Leucine-rich Repeat Variant"/>
    <property type="match status" value="1"/>
</dbReference>
<dbReference type="InterPro" id="IPR011989">
    <property type="entry name" value="ARM-like"/>
</dbReference>
<dbReference type="InterPro" id="IPR016024">
    <property type="entry name" value="ARM-type_fold"/>
</dbReference>
<dbReference type="InterPro" id="IPR008376">
    <property type="entry name" value="Chaperone_Ric-8_A/B"/>
</dbReference>
<dbReference type="InterPro" id="IPR019318">
    <property type="entry name" value="Gua_nucleotide_exch_fac_Ric8"/>
</dbReference>
<dbReference type="PANTHER" id="PTHR12425">
    <property type="entry name" value="SYNEMBRYN"/>
    <property type="match status" value="1"/>
</dbReference>
<dbReference type="PANTHER" id="PTHR12425:SF4">
    <property type="entry name" value="SYNEMBRYN-A"/>
    <property type="match status" value="1"/>
</dbReference>
<dbReference type="Pfam" id="PF10165">
    <property type="entry name" value="Ric8"/>
    <property type="match status" value="1"/>
</dbReference>
<dbReference type="PRINTS" id="PR01802">
    <property type="entry name" value="SYNEMBRYN"/>
</dbReference>
<dbReference type="SUPFAM" id="SSF48371">
    <property type="entry name" value="ARM repeat"/>
    <property type="match status" value="1"/>
</dbReference>
<reference key="1">
    <citation type="submission" date="2005-07" db="EMBL/GenBank/DDBJ databases">
        <authorList>
            <person name="Romo X."/>
            <person name="Pasten P."/>
            <person name="Martinez S."/>
            <person name="Montecino M."/>
            <person name="Hinrichs M.V."/>
            <person name="Olate J."/>
        </authorList>
    </citation>
    <scope>NUCLEOTIDE SEQUENCE [MRNA]</scope>
</reference>
<sequence length="539" mass="61274">MDLGALLDELESGDQELVQKSLAEYNQENSQCFFFNAEQREERKKLGELVISFLNRDLQPSCQIACLETIRILSRDKYALSPFTGRSAIQTLAQYAGLDYSEEMEMPCIPDGESAVEALKGLCNIIYNSVEAQEVAKDLRLVCGLARRLKLYNETRSSHESKFFDLRLLFLLTALSVDMRRQLAQELRGVSLLTDALESTLALKWSDIYEVVTDHLAPPLGKEETERVMEILKALFNITFDISRREVDEEEAALYRHLAAILRHCLLRQSDGEDRTEEFHGHTVNLLVNLPLMCLDVLLTPKVEQGSVEYMGMNMDTVEVLLQFLHRRLDRGHKLREMLTPVLNLLTESSRVHRETRKFLRAKVLPPLRDVKNRPEVGNTLRNKLVRLMTHVDTDVKHCAAEFLFVLCKENVSRFVKYTGYGNAAGLLAARGLLAGGRGEGCYSEDDDTDTEEYREAKANINPVTGRVEEKQPNPMDGMTEEQKEYEAMKLVNMFDKLSREQIIQPMGVTSDGRLGPLDEAAQKMLQRQESSDLDSDSD</sequence>
<accession>Q45TX8</accession>
<evidence type="ECO:0000250" key="1">
    <source>
        <dbReference type="UniProtKB" id="Q80ZG1"/>
    </source>
</evidence>
<evidence type="ECO:0000256" key="2">
    <source>
        <dbReference type="SAM" id="MobiDB-lite"/>
    </source>
</evidence>
<evidence type="ECO:0000305" key="3"/>
<proteinExistence type="evidence at transcript level"/>
<keyword id="KW-0143">Chaperone</keyword>
<keyword id="KW-0963">Cytoplasm</keyword>
<keyword id="KW-0344">Guanine-nucleotide releasing factor</keyword>
<keyword id="KW-1185">Reference proteome</keyword>
<comment type="function">
    <text evidence="1">Chaperone that specifically binds and folds nascent G alpha proteins prior to G protein heterotrimer formation, promoting their stability and activity: folds GNAI1, GNAO1, GNA13 and GNAQ. Does not fold G(s) G-alpha proteins GNAS nor GNAL. Also acts as a guanine nucleotide exchange factor (GEF) for G alpha proteins by stimulating exchange of bound GDP for free GTP.</text>
</comment>
<comment type="subcellular location">
    <subcellularLocation>
        <location evidence="1">Cytoplasm</location>
        <location evidence="1">Cell cortex</location>
    </subcellularLocation>
    <subcellularLocation>
        <location evidence="1">Cytoplasm</location>
    </subcellularLocation>
</comment>
<comment type="similarity">
    <text evidence="3">Belongs to the synembryn family.</text>
</comment>
<comment type="sequence caution" evidence="3">
    <conflict type="erroneous initiation">
        <sequence resource="EMBL-CDS" id="AAZ23806"/>
    </conflict>
</comment>
<name>RIC8A_XENLA</name>
<protein>
    <recommendedName>
        <fullName>Chaperone Ric-8A</fullName>
    </recommendedName>
    <alternativeName>
        <fullName>Synembryn-A</fullName>
    </alternativeName>
</protein>
<gene>
    <name type="primary">ric8a</name>
    <name type="synonym">syn</name>
</gene>
<organism>
    <name type="scientific">Xenopus laevis</name>
    <name type="common">African clawed frog</name>
    <dbReference type="NCBI Taxonomy" id="8355"/>
    <lineage>
        <taxon>Eukaryota</taxon>
        <taxon>Metazoa</taxon>
        <taxon>Chordata</taxon>
        <taxon>Craniata</taxon>
        <taxon>Vertebrata</taxon>
        <taxon>Euteleostomi</taxon>
        <taxon>Amphibia</taxon>
        <taxon>Batrachia</taxon>
        <taxon>Anura</taxon>
        <taxon>Pipoidea</taxon>
        <taxon>Pipidae</taxon>
        <taxon>Xenopodinae</taxon>
        <taxon>Xenopus</taxon>
        <taxon>Xenopus</taxon>
    </lineage>
</organism>